<accession>A4SZR8</accession>
<protein>
    <recommendedName>
        <fullName evidence="1">Chaperone protein DnaK</fullName>
    </recommendedName>
    <alternativeName>
        <fullName evidence="1">HSP70</fullName>
    </alternativeName>
    <alternativeName>
        <fullName evidence="1">Heat shock 70 kDa protein</fullName>
    </alternativeName>
    <alternativeName>
        <fullName evidence="1">Heat shock protein 70</fullName>
    </alternativeName>
</protein>
<comment type="function">
    <text evidence="1">Acts as a chaperone.</text>
</comment>
<comment type="induction">
    <text evidence="1">By stress conditions e.g. heat shock.</text>
</comment>
<comment type="similarity">
    <text evidence="1">Belongs to the heat shock protein 70 family.</text>
</comment>
<dbReference type="EMBL" id="CP000655">
    <property type="protein sequence ID" value="ABP34982.1"/>
    <property type="molecule type" value="Genomic_DNA"/>
</dbReference>
<dbReference type="RefSeq" id="WP_011903605.1">
    <property type="nucleotide sequence ID" value="NC_009379.1"/>
</dbReference>
<dbReference type="SMR" id="A4SZR8"/>
<dbReference type="GeneID" id="31482158"/>
<dbReference type="KEGG" id="pnu:Pnuc_1769"/>
<dbReference type="eggNOG" id="COG0443">
    <property type="taxonomic scope" value="Bacteria"/>
</dbReference>
<dbReference type="HOGENOM" id="CLU_005965_2_1_4"/>
<dbReference type="Proteomes" id="UP000000231">
    <property type="component" value="Chromosome"/>
</dbReference>
<dbReference type="GO" id="GO:0005524">
    <property type="term" value="F:ATP binding"/>
    <property type="evidence" value="ECO:0007669"/>
    <property type="project" value="UniProtKB-UniRule"/>
</dbReference>
<dbReference type="GO" id="GO:0140662">
    <property type="term" value="F:ATP-dependent protein folding chaperone"/>
    <property type="evidence" value="ECO:0007669"/>
    <property type="project" value="InterPro"/>
</dbReference>
<dbReference type="GO" id="GO:0051082">
    <property type="term" value="F:unfolded protein binding"/>
    <property type="evidence" value="ECO:0007669"/>
    <property type="project" value="InterPro"/>
</dbReference>
<dbReference type="CDD" id="cd10234">
    <property type="entry name" value="ASKHA_NBD_HSP70_DnaK-like"/>
    <property type="match status" value="1"/>
</dbReference>
<dbReference type="FunFam" id="2.60.34.10:FF:000014">
    <property type="entry name" value="Chaperone protein DnaK HSP70"/>
    <property type="match status" value="1"/>
</dbReference>
<dbReference type="FunFam" id="3.30.30.30:FF:000003">
    <property type="entry name" value="Heat shock protein 9"/>
    <property type="match status" value="1"/>
</dbReference>
<dbReference type="FunFam" id="1.20.1270.10:FF:000001">
    <property type="entry name" value="Molecular chaperone DnaK"/>
    <property type="match status" value="1"/>
</dbReference>
<dbReference type="FunFam" id="3.30.420.40:FF:000004">
    <property type="entry name" value="Molecular chaperone DnaK"/>
    <property type="match status" value="1"/>
</dbReference>
<dbReference type="FunFam" id="3.90.640.10:FF:000003">
    <property type="entry name" value="Molecular chaperone DnaK"/>
    <property type="match status" value="1"/>
</dbReference>
<dbReference type="Gene3D" id="1.20.1270.10">
    <property type="match status" value="1"/>
</dbReference>
<dbReference type="Gene3D" id="3.30.420.40">
    <property type="match status" value="2"/>
</dbReference>
<dbReference type="Gene3D" id="3.90.640.10">
    <property type="entry name" value="Actin, Chain A, domain 4"/>
    <property type="match status" value="1"/>
</dbReference>
<dbReference type="Gene3D" id="2.60.34.10">
    <property type="entry name" value="Substrate Binding Domain Of DNAk, Chain A, domain 1"/>
    <property type="match status" value="1"/>
</dbReference>
<dbReference type="HAMAP" id="MF_00332">
    <property type="entry name" value="DnaK"/>
    <property type="match status" value="1"/>
</dbReference>
<dbReference type="InterPro" id="IPR043129">
    <property type="entry name" value="ATPase_NBD"/>
</dbReference>
<dbReference type="InterPro" id="IPR012725">
    <property type="entry name" value="Chaperone_DnaK"/>
</dbReference>
<dbReference type="InterPro" id="IPR018181">
    <property type="entry name" value="Heat_shock_70_CS"/>
</dbReference>
<dbReference type="InterPro" id="IPR029048">
    <property type="entry name" value="HSP70_C_sf"/>
</dbReference>
<dbReference type="InterPro" id="IPR029047">
    <property type="entry name" value="HSP70_peptide-bd_sf"/>
</dbReference>
<dbReference type="InterPro" id="IPR013126">
    <property type="entry name" value="Hsp_70_fam"/>
</dbReference>
<dbReference type="NCBIfam" id="NF001413">
    <property type="entry name" value="PRK00290.1"/>
    <property type="match status" value="1"/>
</dbReference>
<dbReference type="NCBIfam" id="NF003520">
    <property type="entry name" value="PRK05183.1"/>
    <property type="match status" value="1"/>
</dbReference>
<dbReference type="NCBIfam" id="TIGR02350">
    <property type="entry name" value="prok_dnaK"/>
    <property type="match status" value="1"/>
</dbReference>
<dbReference type="PANTHER" id="PTHR19375">
    <property type="entry name" value="HEAT SHOCK PROTEIN 70KDA"/>
    <property type="match status" value="1"/>
</dbReference>
<dbReference type="Pfam" id="PF00012">
    <property type="entry name" value="HSP70"/>
    <property type="match status" value="1"/>
</dbReference>
<dbReference type="PRINTS" id="PR00301">
    <property type="entry name" value="HEATSHOCK70"/>
</dbReference>
<dbReference type="SUPFAM" id="SSF53067">
    <property type="entry name" value="Actin-like ATPase domain"/>
    <property type="match status" value="2"/>
</dbReference>
<dbReference type="SUPFAM" id="SSF100934">
    <property type="entry name" value="Heat shock protein 70kD (HSP70), C-terminal subdomain"/>
    <property type="match status" value="1"/>
</dbReference>
<dbReference type="SUPFAM" id="SSF100920">
    <property type="entry name" value="Heat shock protein 70kD (HSP70), peptide-binding domain"/>
    <property type="match status" value="1"/>
</dbReference>
<dbReference type="PROSITE" id="PS00297">
    <property type="entry name" value="HSP70_1"/>
    <property type="match status" value="1"/>
</dbReference>
<dbReference type="PROSITE" id="PS00329">
    <property type="entry name" value="HSP70_2"/>
    <property type="match status" value="1"/>
</dbReference>
<dbReference type="PROSITE" id="PS01036">
    <property type="entry name" value="HSP70_3"/>
    <property type="match status" value="1"/>
</dbReference>
<feature type="chain" id="PRO_1000079235" description="Chaperone protein DnaK">
    <location>
        <begin position="1"/>
        <end position="644"/>
    </location>
</feature>
<feature type="region of interest" description="Disordered" evidence="2">
    <location>
        <begin position="603"/>
        <end position="644"/>
    </location>
</feature>
<feature type="compositionally biased region" description="Low complexity" evidence="2">
    <location>
        <begin position="612"/>
        <end position="630"/>
    </location>
</feature>
<feature type="compositionally biased region" description="Basic and acidic residues" evidence="2">
    <location>
        <begin position="635"/>
        <end position="644"/>
    </location>
</feature>
<feature type="modified residue" description="Phosphothreonine; by autocatalysis" evidence="1">
    <location>
        <position position="200"/>
    </location>
</feature>
<organism>
    <name type="scientific">Polynucleobacter asymbioticus (strain DSM 18221 / CIP 109841 / QLW-P1DMWA-1)</name>
    <name type="common">Polynucleobacter necessarius subsp. asymbioticus</name>
    <dbReference type="NCBI Taxonomy" id="312153"/>
    <lineage>
        <taxon>Bacteria</taxon>
        <taxon>Pseudomonadati</taxon>
        <taxon>Pseudomonadota</taxon>
        <taxon>Betaproteobacteria</taxon>
        <taxon>Burkholderiales</taxon>
        <taxon>Burkholderiaceae</taxon>
        <taxon>Polynucleobacter</taxon>
    </lineage>
</organism>
<gene>
    <name evidence="1" type="primary">dnaK</name>
    <name type="ordered locus">Pnuc_1769</name>
</gene>
<reference key="1">
    <citation type="journal article" date="2012" name="Stand. Genomic Sci.">
        <title>Complete genome sequence of Polynucleobacter necessarius subsp. asymbioticus type strain (QLW-P1DMWA-1(T)).</title>
        <authorList>
            <person name="Meincke L."/>
            <person name="Copeland A."/>
            <person name="Lapidus A."/>
            <person name="Lucas S."/>
            <person name="Berry K.W."/>
            <person name="Del Rio T.G."/>
            <person name="Hammon N."/>
            <person name="Dalin E."/>
            <person name="Tice H."/>
            <person name="Pitluck S."/>
            <person name="Richardson P."/>
            <person name="Bruce D."/>
            <person name="Goodwin L."/>
            <person name="Han C."/>
            <person name="Tapia R."/>
            <person name="Detter J.C."/>
            <person name="Schmutz J."/>
            <person name="Brettin T."/>
            <person name="Larimer F."/>
            <person name="Land M."/>
            <person name="Hauser L."/>
            <person name="Kyrpides N.C."/>
            <person name="Ivanova N."/>
            <person name="Goker M."/>
            <person name="Woyke T."/>
            <person name="Wu Q.L."/>
            <person name="Pockl M."/>
            <person name="Hahn M.W."/>
            <person name="Klenk H.P."/>
        </authorList>
    </citation>
    <scope>NUCLEOTIDE SEQUENCE [LARGE SCALE GENOMIC DNA]</scope>
    <source>
        <strain>DSM 18221 / CIP 109841 / QLW-P1DMWA-1</strain>
    </source>
</reference>
<proteinExistence type="inferred from homology"/>
<name>DNAK_POLAQ</name>
<evidence type="ECO:0000255" key="1">
    <source>
        <dbReference type="HAMAP-Rule" id="MF_00332"/>
    </source>
</evidence>
<evidence type="ECO:0000256" key="2">
    <source>
        <dbReference type="SAM" id="MobiDB-lite"/>
    </source>
</evidence>
<keyword id="KW-0067">ATP-binding</keyword>
<keyword id="KW-0143">Chaperone</keyword>
<keyword id="KW-0547">Nucleotide-binding</keyword>
<keyword id="KW-0597">Phosphoprotein</keyword>
<keyword id="KW-1185">Reference proteome</keyword>
<keyword id="KW-0346">Stress response</keyword>
<sequence>MGKIIGIDLGTTNSCVSVVENNAPKVVENAEGGRTTPSIIAYVEDGEVLVGAPAKRQSVTNPKNTIYAVKRLMGRKFTDPEVQKDIGLMPYSIIAADNGDAWVEARDRKMAPQQVSAEILRKMKKTAEDYLGEEVTEAVITVPAYFNDSQRQATKDAGRIAGLDVKRIINEPTAAALAFGLDKQDKVDRKIAVYDLGGGTFDVSIIEIANVDGEKQFEVLSTNGDTFLGGEDFDQRIIDWIIAEFKKEQGVDLSKDVLALQRLKDAAEKAKIELSSAQQTEINLPYVTADASGPKHLNLKLTRAKLESLVEELINRTAGPCLTAIKDAGVNVSEIDDVILVGGQTRMPAVQDKVKEIFGKEPRKDVNPDEAVAVGAAIQGSVLSGDRKDVLLLDVTPLSLGIETLGGVMTKMIPKNTTIPTKHSQVYSTAEDNQPAVTIKCFQGEREMAAANKLLGEFNLEGIAPAQRGMPQIEVTFDIDANGILHVTAKDKTTGKENKITIKANSGLTEEEIQRMVKDAEANAAEDKKALELVTARNTADALAHSTKKALEEHGASLEASEKEAIEAALKELDEAIKGSDKEAIEAKTEALGKASQKLGEKVMAAEQAKSGGAAPGAAPGGAQQAAPDADVVDADFKEVDDKK</sequence>